<comment type="function">
    <text evidence="4">Has kallikrein-like activity, converts kininogens to kinins, and has dilatory effects on the blood vessel walls. Shows highest activity toward Pro-Phe-Arg-MCA and Boc-Val-Leu-Lys-MCA in vitro. Has preference for Arg and Lys in position P1 and hydrophobic residues in position P2.</text>
</comment>
<comment type="activity regulation">
    <text evidence="4">Strongly inhibited by aprotinin, moderately inhibited by secretory leukoprotease inhibitor, the Kunitz-type soybean trypsin inhibitor, and leupeptin, and not inhibited by urinary trypsin inhibitor or alpha-1 protease inhibitor.</text>
</comment>
<comment type="biophysicochemical properties">
    <phDependence>
        <text evidence="4">Optimum pH is 9.0.</text>
    </phDependence>
</comment>
<comment type="subcellular location">
    <subcellularLocation>
        <location>Secreted</location>
    </subcellularLocation>
</comment>
<comment type="tissue specificity">
    <text>Submaxillary and sublingual salivary glands.</text>
</comment>
<comment type="toxic dose">
    <text evidence="4">LD(50) is 1 mg/kg by intraperitoneal injection into mice. This injection causes irregular respiration, paralysis, convulsions and death.</text>
</comment>
<comment type="similarity">
    <text evidence="3">Belongs to the peptidase S1 family. Kallikrein subfamily.</text>
</comment>
<keyword id="KW-0903">Direct protein sequencing</keyword>
<keyword id="KW-1015">Disulfide bond</keyword>
<keyword id="KW-0325">Glycoprotein</keyword>
<keyword id="KW-0378">Hydrolase</keyword>
<keyword id="KW-0645">Protease</keyword>
<keyword id="KW-0964">Secreted</keyword>
<keyword id="KW-0720">Serine protease</keyword>
<keyword id="KW-0732">Signal</keyword>
<keyword id="KW-0800">Toxin</keyword>
<keyword id="KW-0865">Zymogen</keyword>
<sequence length="282" mass="31066">MCFLLLCLTLTLAGTGAVPTGPSIEIHSRIIGGWECDKHSQPWQALLTFTRKHNSVCGGVLVHSQWVLTAAHCIGDNYKVLLGLHDRSSEESTVQEARVSARFPHPLYNMTLLNLLLSHKMNLTFFYKTFLGADFSHDLMLLRLDQPVQLTDAVQVLDLPTQEPQVGSTCHVSGWGRTSQNYENSFVLPEKLQCVEFTLLSNNECSHAHMFKVTEAMLCAGHMEGGKDSCVGDSGGPLICDGVFQGIASWGSSPCGQQGRPGIYVKVFLYISWIQETIKAHS</sequence>
<reference key="1">
    <citation type="journal article" date="2004" name="Proc. Natl. Acad. Sci. U.S.A.">
        <title>Blarina toxin, a mammalian lethal venom from the short-tailed shrew Blarina brevicauda: isolation and characterization.</title>
        <authorList>
            <person name="Kita M."/>
            <person name="Nakamura Y."/>
            <person name="Okumura Y."/>
            <person name="Ohdachi S.D."/>
            <person name="Oba Y."/>
            <person name="Yoshikuni M."/>
            <person name="Kido H."/>
            <person name="Uemura D."/>
        </authorList>
    </citation>
    <scope>NUCLEOTIDE SEQUENCE [MRNA]</scope>
    <scope>PROTEIN SEQUENCE OF 30-54</scope>
    <scope>FUNCTION</scope>
    <scope>CATALYTIC ACTIVITY</scope>
    <scope>ACTIVITY REGULATION</scope>
    <scope>BIOPHYSICOCHEMICAL PROPERTIES</scope>
    <scope>TOXIC DOSE</scope>
    <source>
        <tissue>Saliva</tissue>
        <tissue>Salivary gland</tissue>
    </source>
</reference>
<proteinExistence type="evidence at protein level"/>
<name>BLTX_BLABR</name>
<organism>
    <name type="scientific">Blarina brevicauda</name>
    <name type="common">Northern short-tailed shrew</name>
    <dbReference type="NCBI Taxonomy" id="9387"/>
    <lineage>
        <taxon>Eukaryota</taxon>
        <taxon>Metazoa</taxon>
        <taxon>Chordata</taxon>
        <taxon>Craniata</taxon>
        <taxon>Vertebrata</taxon>
        <taxon>Euteleostomi</taxon>
        <taxon>Mammalia</taxon>
        <taxon>Eutheria</taxon>
        <taxon>Laurasiatheria</taxon>
        <taxon>Eulipotyphla</taxon>
        <taxon>Soricidae</taxon>
        <taxon>Soricinae</taxon>
        <taxon>Blarina</taxon>
    </lineage>
</organism>
<gene>
    <name type="primary">BTX</name>
</gene>
<evidence type="ECO:0000250" key="1"/>
<evidence type="ECO:0000255" key="2"/>
<evidence type="ECO:0000255" key="3">
    <source>
        <dbReference type="PROSITE-ProRule" id="PRU00274"/>
    </source>
</evidence>
<evidence type="ECO:0000269" key="4">
    <source>
    </source>
</evidence>
<dbReference type="EC" id="3.4.21.-"/>
<dbReference type="EMBL" id="AB111919">
    <property type="protein sequence ID" value="BAD18893.1"/>
    <property type="molecule type" value="mRNA"/>
</dbReference>
<dbReference type="SMR" id="Q76B45"/>
<dbReference type="MEROPS" id="S01.409"/>
<dbReference type="GlyCosmos" id="Q76B45">
    <property type="glycosylation" value="3 sites, No reported glycans"/>
</dbReference>
<dbReference type="GO" id="GO:0005576">
    <property type="term" value="C:extracellular region"/>
    <property type="evidence" value="ECO:0007669"/>
    <property type="project" value="UniProtKB-SubCell"/>
</dbReference>
<dbReference type="GO" id="GO:0030141">
    <property type="term" value="C:secretory granule"/>
    <property type="evidence" value="ECO:0007669"/>
    <property type="project" value="TreeGrafter"/>
</dbReference>
<dbReference type="GO" id="GO:0004252">
    <property type="term" value="F:serine-type endopeptidase activity"/>
    <property type="evidence" value="ECO:0007669"/>
    <property type="project" value="InterPro"/>
</dbReference>
<dbReference type="GO" id="GO:0090729">
    <property type="term" value="F:toxin activity"/>
    <property type="evidence" value="ECO:0007669"/>
    <property type="project" value="UniProtKB-KW"/>
</dbReference>
<dbReference type="GO" id="GO:0003073">
    <property type="term" value="P:regulation of systemic arterial blood pressure"/>
    <property type="evidence" value="ECO:0007669"/>
    <property type="project" value="TreeGrafter"/>
</dbReference>
<dbReference type="GO" id="GO:0031638">
    <property type="term" value="P:zymogen activation"/>
    <property type="evidence" value="ECO:0007669"/>
    <property type="project" value="TreeGrafter"/>
</dbReference>
<dbReference type="CDD" id="cd00190">
    <property type="entry name" value="Tryp_SPc"/>
    <property type="match status" value="1"/>
</dbReference>
<dbReference type="FunFam" id="2.40.10.10:FF:000120">
    <property type="entry name" value="Putative serine protease"/>
    <property type="match status" value="1"/>
</dbReference>
<dbReference type="Gene3D" id="2.40.10.10">
    <property type="entry name" value="Trypsin-like serine proteases"/>
    <property type="match status" value="2"/>
</dbReference>
<dbReference type="InterPro" id="IPR009003">
    <property type="entry name" value="Peptidase_S1_PA"/>
</dbReference>
<dbReference type="InterPro" id="IPR043504">
    <property type="entry name" value="Peptidase_S1_PA_chymotrypsin"/>
</dbReference>
<dbReference type="InterPro" id="IPR001314">
    <property type="entry name" value="Peptidase_S1A"/>
</dbReference>
<dbReference type="InterPro" id="IPR001254">
    <property type="entry name" value="Trypsin_dom"/>
</dbReference>
<dbReference type="InterPro" id="IPR018114">
    <property type="entry name" value="TRYPSIN_HIS"/>
</dbReference>
<dbReference type="InterPro" id="IPR033116">
    <property type="entry name" value="TRYPSIN_SER"/>
</dbReference>
<dbReference type="PANTHER" id="PTHR24271:SF47">
    <property type="entry name" value="KALLIKREIN-1"/>
    <property type="match status" value="1"/>
</dbReference>
<dbReference type="PANTHER" id="PTHR24271">
    <property type="entry name" value="KALLIKREIN-RELATED"/>
    <property type="match status" value="1"/>
</dbReference>
<dbReference type="Pfam" id="PF00089">
    <property type="entry name" value="Trypsin"/>
    <property type="match status" value="1"/>
</dbReference>
<dbReference type="PRINTS" id="PR00722">
    <property type="entry name" value="CHYMOTRYPSIN"/>
</dbReference>
<dbReference type="SMART" id="SM00020">
    <property type="entry name" value="Tryp_SPc"/>
    <property type="match status" value="1"/>
</dbReference>
<dbReference type="SUPFAM" id="SSF50494">
    <property type="entry name" value="Trypsin-like serine proteases"/>
    <property type="match status" value="1"/>
</dbReference>
<dbReference type="PROSITE" id="PS50240">
    <property type="entry name" value="TRYPSIN_DOM"/>
    <property type="match status" value="1"/>
</dbReference>
<dbReference type="PROSITE" id="PS00134">
    <property type="entry name" value="TRYPSIN_HIS"/>
    <property type="match status" value="1"/>
</dbReference>
<dbReference type="PROSITE" id="PS00135">
    <property type="entry name" value="TRYPSIN_SER"/>
    <property type="match status" value="1"/>
</dbReference>
<feature type="signal peptide" evidence="2">
    <location>
        <begin position="1"/>
        <end position="17"/>
    </location>
</feature>
<feature type="propeptide" id="PRO_0000283773" description="Activation peptide" evidence="4">
    <location>
        <begin position="18"/>
        <end position="29"/>
    </location>
</feature>
<feature type="chain" id="PRO_0000283774" description="Blarina toxin">
    <location>
        <begin position="30"/>
        <end position="282"/>
    </location>
</feature>
<feature type="domain" description="Peptidase S1" evidence="3">
    <location>
        <begin position="30"/>
        <end position="279"/>
    </location>
</feature>
<feature type="active site" description="Charge relay system" evidence="1">
    <location>
        <position position="72"/>
    </location>
</feature>
<feature type="active site" description="Charge relay system" evidence="1">
    <location>
        <position position="138"/>
    </location>
</feature>
<feature type="active site" description="Charge relay system" evidence="1">
    <location>
        <position position="234"/>
    </location>
</feature>
<feature type="glycosylation site" description="O-linked (GalNAc...) serine" evidence="1">
    <location>
        <position position="100"/>
    </location>
</feature>
<feature type="glycosylation site" description="N-linked (GlcNAc...) asparagine" evidence="2">
    <location>
        <position position="109"/>
    </location>
</feature>
<feature type="glycosylation site" description="N-linked (GlcNAc...) asparagine" evidence="2">
    <location>
        <position position="122"/>
    </location>
</feature>
<feature type="disulfide bond" evidence="3">
    <location>
        <begin position="36"/>
        <end position="194"/>
    </location>
</feature>
<feature type="disulfide bond" evidence="3">
    <location>
        <begin position="57"/>
        <end position="73"/>
    </location>
</feature>
<feature type="disulfide bond" evidence="3">
    <location>
        <begin position="170"/>
        <end position="240"/>
    </location>
</feature>
<feature type="disulfide bond" evidence="3">
    <location>
        <begin position="205"/>
        <end position="219"/>
    </location>
</feature>
<feature type="disulfide bond" evidence="3">
    <location>
        <begin position="230"/>
        <end position="255"/>
    </location>
</feature>
<accession>Q76B45</accession>
<protein>
    <recommendedName>
        <fullName>Blarina toxin</fullName>
        <shortName>BLTX</shortName>
        <ecNumber>3.4.21.-</ecNumber>
    </recommendedName>
</protein>